<accession>Q0IE57</accession>
<evidence type="ECO:0000255" key="1">
    <source>
        <dbReference type="HAMAP-Rule" id="MF_00274"/>
    </source>
</evidence>
<keyword id="KW-0963">Cytoplasm</keyword>
<keyword id="KW-0238">DNA-binding</keyword>
<keyword id="KW-1185">Reference proteome</keyword>
<reference key="1">
    <citation type="journal article" date="2006" name="Proc. Natl. Acad. Sci. U.S.A.">
        <title>Genome sequence of Synechococcus CC9311: insights into adaptation to a coastal environment.</title>
        <authorList>
            <person name="Palenik B."/>
            <person name="Ren Q."/>
            <person name="Dupont C.L."/>
            <person name="Myers G.S."/>
            <person name="Heidelberg J.F."/>
            <person name="Badger J.H."/>
            <person name="Madupu R."/>
            <person name="Nelson W.C."/>
            <person name="Brinkac L.M."/>
            <person name="Dodson R.J."/>
            <person name="Durkin A.S."/>
            <person name="Daugherty S.C."/>
            <person name="Sullivan S.A."/>
            <person name="Khouri H."/>
            <person name="Mohamoud Y."/>
            <person name="Halpin R."/>
            <person name="Paulsen I.T."/>
        </authorList>
    </citation>
    <scope>NUCLEOTIDE SEQUENCE [LARGE SCALE GENOMIC DNA]</scope>
    <source>
        <strain>CC9311</strain>
    </source>
</reference>
<feature type="chain" id="PRO_1000003857" description="Nucleoid-associated protein sync_0026">
    <location>
        <begin position="1"/>
        <end position="113"/>
    </location>
</feature>
<dbReference type="EMBL" id="CP000435">
    <property type="protein sequence ID" value="ABI45040.1"/>
    <property type="molecule type" value="Genomic_DNA"/>
</dbReference>
<dbReference type="RefSeq" id="WP_011618017.1">
    <property type="nucleotide sequence ID" value="NC_008319.1"/>
</dbReference>
<dbReference type="SMR" id="Q0IE57"/>
<dbReference type="STRING" id="64471.sync_0026"/>
<dbReference type="KEGG" id="syg:sync_0026"/>
<dbReference type="eggNOG" id="COG0718">
    <property type="taxonomic scope" value="Bacteria"/>
</dbReference>
<dbReference type="HOGENOM" id="CLU_140930_0_1_3"/>
<dbReference type="OrthoDB" id="487780at2"/>
<dbReference type="Proteomes" id="UP000001961">
    <property type="component" value="Chromosome"/>
</dbReference>
<dbReference type="GO" id="GO:0043590">
    <property type="term" value="C:bacterial nucleoid"/>
    <property type="evidence" value="ECO:0007669"/>
    <property type="project" value="UniProtKB-UniRule"/>
</dbReference>
<dbReference type="GO" id="GO:0005829">
    <property type="term" value="C:cytosol"/>
    <property type="evidence" value="ECO:0007669"/>
    <property type="project" value="TreeGrafter"/>
</dbReference>
<dbReference type="GO" id="GO:0003677">
    <property type="term" value="F:DNA binding"/>
    <property type="evidence" value="ECO:0007669"/>
    <property type="project" value="UniProtKB-UniRule"/>
</dbReference>
<dbReference type="Gene3D" id="3.30.1310.10">
    <property type="entry name" value="Nucleoid-associated protein YbaB-like domain"/>
    <property type="match status" value="1"/>
</dbReference>
<dbReference type="HAMAP" id="MF_00274">
    <property type="entry name" value="DNA_YbaB_EbfC"/>
    <property type="match status" value="1"/>
</dbReference>
<dbReference type="InterPro" id="IPR036894">
    <property type="entry name" value="YbaB-like_sf"/>
</dbReference>
<dbReference type="InterPro" id="IPR004401">
    <property type="entry name" value="YbaB/EbfC"/>
</dbReference>
<dbReference type="NCBIfam" id="TIGR00103">
    <property type="entry name" value="DNA_YbaB_EbfC"/>
    <property type="match status" value="1"/>
</dbReference>
<dbReference type="PANTHER" id="PTHR33449">
    <property type="entry name" value="NUCLEOID-ASSOCIATED PROTEIN YBAB"/>
    <property type="match status" value="1"/>
</dbReference>
<dbReference type="PANTHER" id="PTHR33449:SF1">
    <property type="entry name" value="NUCLEOID-ASSOCIATED PROTEIN YBAB"/>
    <property type="match status" value="1"/>
</dbReference>
<dbReference type="Pfam" id="PF02575">
    <property type="entry name" value="YbaB_DNA_bd"/>
    <property type="match status" value="1"/>
</dbReference>
<dbReference type="PIRSF" id="PIRSF004555">
    <property type="entry name" value="UCP004555"/>
    <property type="match status" value="1"/>
</dbReference>
<dbReference type="SUPFAM" id="SSF82607">
    <property type="entry name" value="YbaB-like"/>
    <property type="match status" value="1"/>
</dbReference>
<sequence length="113" mass="12241">MAGFGLPNFGQLTEAFRKAQQIQQDAQKLQEELDAMEIEGNSEDGRASIWLSGNQQPLRVRLDPSLLSEGQEATEAATLAALQSAYERSTGTMKERMEELTGGLNLNLPGMGG</sequence>
<organism>
    <name type="scientific">Synechococcus sp. (strain CC9311)</name>
    <dbReference type="NCBI Taxonomy" id="64471"/>
    <lineage>
        <taxon>Bacteria</taxon>
        <taxon>Bacillati</taxon>
        <taxon>Cyanobacteriota</taxon>
        <taxon>Cyanophyceae</taxon>
        <taxon>Synechococcales</taxon>
        <taxon>Synechococcaceae</taxon>
        <taxon>Synechococcus</taxon>
    </lineage>
</organism>
<comment type="function">
    <text evidence="1">Binds to DNA and alters its conformation. May be involved in regulation of gene expression, nucleoid organization and DNA protection.</text>
</comment>
<comment type="subunit">
    <text evidence="1">Homodimer.</text>
</comment>
<comment type="subcellular location">
    <subcellularLocation>
        <location evidence="1">Cytoplasm</location>
        <location evidence="1">Nucleoid</location>
    </subcellularLocation>
</comment>
<comment type="similarity">
    <text evidence="1">Belongs to the YbaB/EbfC family.</text>
</comment>
<name>Y026_SYNS3</name>
<gene>
    <name type="ordered locus">sync_0026</name>
</gene>
<proteinExistence type="inferred from homology"/>
<protein>
    <recommendedName>
        <fullName evidence="1">Nucleoid-associated protein sync_0026</fullName>
    </recommendedName>
</protein>